<reference key="1">
    <citation type="journal article" date="2001" name="Appl. Environ. Microbiol.">
        <title>Identification and disruption of the proBA Locus in Listeria monocytogenes: role of proline biosynthesis in salt tolerance and murine infection.</title>
        <authorList>
            <person name="Sleator R.D."/>
            <person name="Gahan C.G.M."/>
            <person name="Hill C."/>
        </authorList>
    </citation>
    <scope>NUCLEOTIDE SEQUENCE [GENOMIC DNA]</scope>
</reference>
<reference key="2">
    <citation type="journal article" date="2001" name="Science">
        <title>Comparative genomics of Listeria species.</title>
        <authorList>
            <person name="Glaser P."/>
            <person name="Frangeul L."/>
            <person name="Buchrieser C."/>
            <person name="Rusniok C."/>
            <person name="Amend A."/>
            <person name="Baquero F."/>
            <person name="Berche P."/>
            <person name="Bloecker H."/>
            <person name="Brandt P."/>
            <person name="Chakraborty T."/>
            <person name="Charbit A."/>
            <person name="Chetouani F."/>
            <person name="Couve E."/>
            <person name="de Daruvar A."/>
            <person name="Dehoux P."/>
            <person name="Domann E."/>
            <person name="Dominguez-Bernal G."/>
            <person name="Duchaud E."/>
            <person name="Durant L."/>
            <person name="Dussurget O."/>
            <person name="Entian K.-D."/>
            <person name="Fsihi H."/>
            <person name="Garcia-del Portillo F."/>
            <person name="Garrido P."/>
            <person name="Gautier L."/>
            <person name="Goebel W."/>
            <person name="Gomez-Lopez N."/>
            <person name="Hain T."/>
            <person name="Hauf J."/>
            <person name="Jackson D."/>
            <person name="Jones L.-M."/>
            <person name="Kaerst U."/>
            <person name="Kreft J."/>
            <person name="Kuhn M."/>
            <person name="Kunst F."/>
            <person name="Kurapkat G."/>
            <person name="Madueno E."/>
            <person name="Maitournam A."/>
            <person name="Mata Vicente J."/>
            <person name="Ng E."/>
            <person name="Nedjari H."/>
            <person name="Nordsiek G."/>
            <person name="Novella S."/>
            <person name="de Pablos B."/>
            <person name="Perez-Diaz J.-C."/>
            <person name="Purcell R."/>
            <person name="Remmel B."/>
            <person name="Rose M."/>
            <person name="Schlueter T."/>
            <person name="Simoes N."/>
            <person name="Tierrez A."/>
            <person name="Vazquez-Boland J.-A."/>
            <person name="Voss H."/>
            <person name="Wehland J."/>
            <person name="Cossart P."/>
        </authorList>
    </citation>
    <scope>NUCLEOTIDE SEQUENCE [LARGE SCALE GENOMIC DNA]</scope>
    <source>
        <strain>ATCC BAA-679 / EGD-e</strain>
    </source>
</reference>
<organism>
    <name type="scientific">Listeria monocytogenes serovar 1/2a (strain ATCC BAA-679 / EGD-e)</name>
    <dbReference type="NCBI Taxonomy" id="169963"/>
    <lineage>
        <taxon>Bacteria</taxon>
        <taxon>Bacillati</taxon>
        <taxon>Bacillota</taxon>
        <taxon>Bacilli</taxon>
        <taxon>Bacillales</taxon>
        <taxon>Listeriaceae</taxon>
        <taxon>Listeria</taxon>
    </lineage>
</organism>
<comment type="function">
    <text evidence="1">Catalyzes the transfer of a phosphate group to glutamate to form L-glutamate 5-phosphate.</text>
</comment>
<comment type="catalytic activity">
    <reaction evidence="1">
        <text>L-glutamate + ATP = L-glutamyl 5-phosphate + ADP</text>
        <dbReference type="Rhea" id="RHEA:14877"/>
        <dbReference type="ChEBI" id="CHEBI:29985"/>
        <dbReference type="ChEBI" id="CHEBI:30616"/>
        <dbReference type="ChEBI" id="CHEBI:58274"/>
        <dbReference type="ChEBI" id="CHEBI:456216"/>
        <dbReference type="EC" id="2.7.2.11"/>
    </reaction>
</comment>
<comment type="pathway">
    <text evidence="1">Amino-acid biosynthesis; L-proline biosynthesis; L-glutamate 5-semialdehyde from L-glutamate: step 1/2.</text>
</comment>
<comment type="subcellular location">
    <subcellularLocation>
        <location evidence="1">Cytoplasm</location>
    </subcellularLocation>
</comment>
<comment type="similarity">
    <text evidence="1">Belongs to the glutamate 5-kinase family.</text>
</comment>
<gene>
    <name evidence="1" type="primary">proB</name>
    <name type="ordered locus">lmo1260</name>
</gene>
<keyword id="KW-0028">Amino-acid biosynthesis</keyword>
<keyword id="KW-0067">ATP-binding</keyword>
<keyword id="KW-0963">Cytoplasm</keyword>
<keyword id="KW-0418">Kinase</keyword>
<keyword id="KW-0547">Nucleotide-binding</keyword>
<keyword id="KW-0641">Proline biosynthesis</keyword>
<keyword id="KW-1185">Reference proteome</keyword>
<keyword id="KW-0808">Transferase</keyword>
<feature type="chain" id="PRO_0000109689" description="Glutamate 5-kinase">
    <location>
        <begin position="1"/>
        <end position="276"/>
    </location>
</feature>
<feature type="binding site" evidence="1">
    <location>
        <position position="14"/>
    </location>
    <ligand>
        <name>ATP</name>
        <dbReference type="ChEBI" id="CHEBI:30616"/>
    </ligand>
</feature>
<feature type="binding site" evidence="1">
    <location>
        <position position="54"/>
    </location>
    <ligand>
        <name>substrate</name>
    </ligand>
</feature>
<feature type="binding site" evidence="1">
    <location>
        <position position="141"/>
    </location>
    <ligand>
        <name>substrate</name>
    </ligand>
</feature>
<feature type="binding site" evidence="1">
    <location>
        <position position="157"/>
    </location>
    <ligand>
        <name>substrate</name>
    </ligand>
</feature>
<feature type="binding site" evidence="1">
    <location>
        <begin position="177"/>
        <end position="178"/>
    </location>
    <ligand>
        <name>ATP</name>
        <dbReference type="ChEBI" id="CHEBI:30616"/>
    </ligand>
</feature>
<feature type="binding site" evidence="1">
    <location>
        <begin position="219"/>
        <end position="225"/>
    </location>
    <ligand>
        <name>ATP</name>
        <dbReference type="ChEBI" id="CHEBI:30616"/>
    </ligand>
</feature>
<name>PROB_LISMO</name>
<proteinExistence type="inferred from homology"/>
<sequence length="276" mass="30034">MRESLKNSKRLVIKVGTSTLMYGNGHINLRTIEKLAMVLSDLRNEGKEVILVSSGAIGVGCHKLQLPVRPTSIPEQQAVASVGQSELMHIYSKFFGEYGQVVGQVLLTRDVTDFPISRENVMNTLESLLERGIIPIVNENDTVAVEELEHVTKYGDNDLLSAIVAKLVQADLLIMLSDIDGFYGSNPSTDPDAVMFSEINQITPEIEALAGGKGSKFGTGGMLTKLSAASYCMNANQKMILTNGKNPTIIFDIMQGEQIGTLFASKKEEFSHDGTH</sequence>
<accession>Q93Q56</accession>
<protein>
    <recommendedName>
        <fullName evidence="1">Glutamate 5-kinase</fullName>
        <ecNumber evidence="1">2.7.2.11</ecNumber>
    </recommendedName>
    <alternativeName>
        <fullName evidence="1">Gamma-glutamyl kinase</fullName>
        <shortName evidence="1">GK</shortName>
    </alternativeName>
</protein>
<dbReference type="EC" id="2.7.2.11" evidence="1"/>
<dbReference type="EMBL" id="AF282880">
    <property type="protein sequence ID" value="AAK62254.1"/>
    <property type="molecule type" value="Genomic_DNA"/>
</dbReference>
<dbReference type="EMBL" id="AL591978">
    <property type="protein sequence ID" value="CAC99338.1"/>
    <property type="molecule type" value="Genomic_DNA"/>
</dbReference>
<dbReference type="PIR" id="AD1232">
    <property type="entry name" value="AD1232"/>
</dbReference>
<dbReference type="RefSeq" id="NP_464785.1">
    <property type="nucleotide sequence ID" value="NC_003210.1"/>
</dbReference>
<dbReference type="RefSeq" id="WP_003723561.1">
    <property type="nucleotide sequence ID" value="NZ_CP149495.1"/>
</dbReference>
<dbReference type="SMR" id="Q93Q56"/>
<dbReference type="STRING" id="169963.gene:17593917"/>
<dbReference type="PaxDb" id="169963-lmo1260"/>
<dbReference type="EnsemblBacteria" id="CAC99338">
    <property type="protein sequence ID" value="CAC99338"/>
    <property type="gene ID" value="CAC99338"/>
</dbReference>
<dbReference type="GeneID" id="985996"/>
<dbReference type="KEGG" id="lmo:lmo1260"/>
<dbReference type="PATRIC" id="fig|169963.11.peg.1295"/>
<dbReference type="eggNOG" id="COG0263">
    <property type="taxonomic scope" value="Bacteria"/>
</dbReference>
<dbReference type="HOGENOM" id="CLU_025400_0_2_9"/>
<dbReference type="OrthoDB" id="9804434at2"/>
<dbReference type="PhylomeDB" id="Q93Q56"/>
<dbReference type="BioCyc" id="LMON169963:LMO1260-MONOMER"/>
<dbReference type="UniPathway" id="UPA00098">
    <property type="reaction ID" value="UER00359"/>
</dbReference>
<dbReference type="Proteomes" id="UP000000817">
    <property type="component" value="Chromosome"/>
</dbReference>
<dbReference type="GO" id="GO:0005829">
    <property type="term" value="C:cytosol"/>
    <property type="evidence" value="ECO:0000318"/>
    <property type="project" value="GO_Central"/>
</dbReference>
<dbReference type="GO" id="GO:0005524">
    <property type="term" value="F:ATP binding"/>
    <property type="evidence" value="ECO:0007669"/>
    <property type="project" value="UniProtKB-KW"/>
</dbReference>
<dbReference type="GO" id="GO:0004349">
    <property type="term" value="F:glutamate 5-kinase activity"/>
    <property type="evidence" value="ECO:0000318"/>
    <property type="project" value="GO_Central"/>
</dbReference>
<dbReference type="GO" id="GO:0055129">
    <property type="term" value="P:L-proline biosynthetic process"/>
    <property type="evidence" value="ECO:0007669"/>
    <property type="project" value="UniProtKB-UniRule"/>
</dbReference>
<dbReference type="GO" id="GO:0006561">
    <property type="term" value="P:proline biosynthetic process"/>
    <property type="evidence" value="ECO:0000318"/>
    <property type="project" value="GO_Central"/>
</dbReference>
<dbReference type="CDD" id="cd04242">
    <property type="entry name" value="AAK_G5K_ProB"/>
    <property type="match status" value="1"/>
</dbReference>
<dbReference type="FunFam" id="3.40.1160.10:FF:000036">
    <property type="entry name" value="Glutamate 5-kinase"/>
    <property type="match status" value="1"/>
</dbReference>
<dbReference type="Gene3D" id="3.40.1160.10">
    <property type="entry name" value="Acetylglutamate kinase-like"/>
    <property type="match status" value="1"/>
</dbReference>
<dbReference type="HAMAP" id="MF_00456">
    <property type="entry name" value="ProB"/>
    <property type="match status" value="1"/>
</dbReference>
<dbReference type="InterPro" id="IPR036393">
    <property type="entry name" value="AceGlu_kinase-like_sf"/>
</dbReference>
<dbReference type="InterPro" id="IPR001048">
    <property type="entry name" value="Asp/Glu/Uridylate_kinase"/>
</dbReference>
<dbReference type="InterPro" id="IPR041739">
    <property type="entry name" value="G5K_ProB"/>
</dbReference>
<dbReference type="InterPro" id="IPR001057">
    <property type="entry name" value="Glu/AcGlu_kinase"/>
</dbReference>
<dbReference type="InterPro" id="IPR011529">
    <property type="entry name" value="Glu_5kinase"/>
</dbReference>
<dbReference type="InterPro" id="IPR005715">
    <property type="entry name" value="Glu_5kinase/COase_Synthase"/>
</dbReference>
<dbReference type="InterPro" id="IPR019797">
    <property type="entry name" value="Glutamate_5-kinase_CS"/>
</dbReference>
<dbReference type="NCBIfam" id="TIGR01027">
    <property type="entry name" value="proB"/>
    <property type="match status" value="1"/>
</dbReference>
<dbReference type="PANTHER" id="PTHR43654">
    <property type="entry name" value="GLUTAMATE 5-KINASE"/>
    <property type="match status" value="1"/>
</dbReference>
<dbReference type="PANTHER" id="PTHR43654:SF1">
    <property type="entry name" value="ISOPENTENYL PHOSPHATE KINASE"/>
    <property type="match status" value="1"/>
</dbReference>
<dbReference type="Pfam" id="PF00696">
    <property type="entry name" value="AA_kinase"/>
    <property type="match status" value="1"/>
</dbReference>
<dbReference type="PIRSF" id="PIRSF000729">
    <property type="entry name" value="GK"/>
    <property type="match status" value="1"/>
</dbReference>
<dbReference type="PRINTS" id="PR00474">
    <property type="entry name" value="GLU5KINASE"/>
</dbReference>
<dbReference type="SUPFAM" id="SSF53633">
    <property type="entry name" value="Carbamate kinase-like"/>
    <property type="match status" value="1"/>
</dbReference>
<dbReference type="PROSITE" id="PS00902">
    <property type="entry name" value="GLUTAMATE_5_KINASE"/>
    <property type="match status" value="1"/>
</dbReference>
<evidence type="ECO:0000255" key="1">
    <source>
        <dbReference type="HAMAP-Rule" id="MF_00456"/>
    </source>
</evidence>